<feature type="chain" id="PRO_0000226986" description="Keratinocyte-associated protein 3">
    <location>
        <begin position="1"/>
        <end position="240"/>
    </location>
</feature>
<feature type="transmembrane region" description="Helical" evidence="1">
    <location>
        <begin position="21"/>
        <end position="41"/>
    </location>
</feature>
<feature type="transmembrane region" description="Helical" evidence="1">
    <location>
        <begin position="63"/>
        <end position="83"/>
    </location>
</feature>
<feature type="transmembrane region" description="Helical" evidence="1">
    <location>
        <begin position="95"/>
        <end position="115"/>
    </location>
</feature>
<feature type="transmembrane region" description="Helical" evidence="1">
    <location>
        <begin position="163"/>
        <end position="183"/>
    </location>
</feature>
<feature type="splice variant" id="VSP_017531" description="In isoform 2." evidence="2">
    <location>
        <begin position="87"/>
        <end position="112"/>
    </location>
</feature>
<feature type="sequence conflict" description="In Ref. 1; BAB25399." evidence="3" ref="1">
    <original>G</original>
    <variation>E</variation>
    <location>
        <position position="14"/>
    </location>
</feature>
<dbReference type="EMBL" id="AK007999">
    <property type="protein sequence ID" value="BAB25399.1"/>
    <property type="status" value="ALT_INIT"/>
    <property type="molecule type" value="mRNA"/>
</dbReference>
<dbReference type="EMBL" id="BC027812">
    <property type="protein sequence ID" value="AAH27812.1"/>
    <property type="status" value="ALT_INIT"/>
    <property type="molecule type" value="mRNA"/>
</dbReference>
<dbReference type="EMBL" id="BC107024">
    <property type="protein sequence ID" value="AAI07025.1"/>
    <property type="status" value="ALT_INIT"/>
    <property type="molecule type" value="mRNA"/>
</dbReference>
<dbReference type="EMBL" id="BC107025">
    <property type="protein sequence ID" value="AAI07026.1"/>
    <property type="status" value="ALT_INIT"/>
    <property type="molecule type" value="mRNA"/>
</dbReference>
<dbReference type="CCDS" id="CCDS51459.1">
    <molecule id="Q8K177-1"/>
</dbReference>
<dbReference type="RefSeq" id="NP_001350266.1">
    <molecule id="Q8K177-1"/>
    <property type="nucleotide sequence ID" value="NM_001363337.1"/>
</dbReference>
<dbReference type="RefSeq" id="NP_081497.2">
    <molecule id="Q8K177-1"/>
    <property type="nucleotide sequence ID" value="NM_027221.3"/>
</dbReference>
<dbReference type="RefSeq" id="XP_006504156.1">
    <property type="nucleotide sequence ID" value="XM_006504093.1"/>
</dbReference>
<dbReference type="SMR" id="Q8K177"/>
<dbReference type="FunCoup" id="Q8K177">
    <property type="interactions" value="2"/>
</dbReference>
<dbReference type="STRING" id="10090.ENSMUSP00000060414"/>
<dbReference type="iPTMnet" id="Q8K177"/>
<dbReference type="PhosphoSitePlus" id="Q8K177"/>
<dbReference type="PaxDb" id="10090-ENSMUSP00000060414"/>
<dbReference type="ProteomicsDB" id="269207">
    <molecule id="Q8K177-1"/>
</dbReference>
<dbReference type="ProteomicsDB" id="269208">
    <molecule id="Q8K177-2"/>
</dbReference>
<dbReference type="Antibodypedia" id="62768">
    <property type="antibodies" value="17 antibodies from 8 providers"/>
</dbReference>
<dbReference type="DNASU" id="69815"/>
<dbReference type="Ensembl" id="ENSMUST00000054829.13">
    <molecule id="Q8K177-1"/>
    <property type="protein sequence ID" value="ENSMUSP00000060414.8"/>
    <property type="gene ID" value="ENSMUSG00000029149.15"/>
</dbReference>
<dbReference type="Ensembl" id="ENSMUST00000201625.4">
    <molecule id="Q8K177-1"/>
    <property type="protein sequence ID" value="ENSMUSP00000144052.2"/>
    <property type="gene ID" value="ENSMUSG00000029149.15"/>
</dbReference>
<dbReference type="Ensembl" id="ENSMUST00000201937.4">
    <molecule id="Q8K177-1"/>
    <property type="protein sequence ID" value="ENSMUSP00000144464.2"/>
    <property type="gene ID" value="ENSMUSG00000029149.15"/>
</dbReference>
<dbReference type="GeneID" id="69815"/>
<dbReference type="KEGG" id="mmu:69815"/>
<dbReference type="UCSC" id="uc008wxx.1">
    <molecule id="Q8K177-1"/>
    <property type="organism name" value="mouse"/>
</dbReference>
<dbReference type="AGR" id="MGI:1917065"/>
<dbReference type="CTD" id="200634"/>
<dbReference type="MGI" id="MGI:1917065">
    <property type="gene designation" value="Krtcap3"/>
</dbReference>
<dbReference type="VEuPathDB" id="HostDB:ENSMUSG00000029149"/>
<dbReference type="eggNOG" id="ENOG502QWFA">
    <property type="taxonomic scope" value="Eukaryota"/>
</dbReference>
<dbReference type="GeneTree" id="ENSGT00390000004700"/>
<dbReference type="HOGENOM" id="CLU_089663_0_0_1"/>
<dbReference type="InParanoid" id="Q8K177"/>
<dbReference type="OMA" id="CKWQENV"/>
<dbReference type="PhylomeDB" id="Q8K177"/>
<dbReference type="TreeFam" id="TF332771"/>
<dbReference type="BioGRID-ORCS" id="69815">
    <property type="hits" value="3 hits in 78 CRISPR screens"/>
</dbReference>
<dbReference type="PRO" id="PR:Q8K177"/>
<dbReference type="Proteomes" id="UP000000589">
    <property type="component" value="Chromosome 5"/>
</dbReference>
<dbReference type="RNAct" id="Q8K177">
    <property type="molecule type" value="protein"/>
</dbReference>
<dbReference type="Bgee" id="ENSMUSG00000029149">
    <property type="expression patterns" value="Expressed in duodenum and 64 other cell types or tissues"/>
</dbReference>
<dbReference type="GO" id="GO:0016020">
    <property type="term" value="C:membrane"/>
    <property type="evidence" value="ECO:0007669"/>
    <property type="project" value="UniProtKB-SubCell"/>
</dbReference>
<dbReference type="InterPro" id="IPR020977">
    <property type="entry name" value="Beta-casein-like"/>
</dbReference>
<dbReference type="PANTHER" id="PTHR31258">
    <property type="entry name" value="KERATINOCYTE-ASSOCIATED PROTEIN 3"/>
    <property type="match status" value="1"/>
</dbReference>
<dbReference type="PANTHER" id="PTHR31258:SF1">
    <property type="entry name" value="KERATINOCYTE-ASSOCIATED PROTEIN 3"/>
    <property type="match status" value="1"/>
</dbReference>
<dbReference type="Pfam" id="PF12304">
    <property type="entry name" value="BCLP"/>
    <property type="match status" value="1"/>
</dbReference>
<organism>
    <name type="scientific">Mus musculus</name>
    <name type="common">Mouse</name>
    <dbReference type="NCBI Taxonomy" id="10090"/>
    <lineage>
        <taxon>Eukaryota</taxon>
        <taxon>Metazoa</taxon>
        <taxon>Chordata</taxon>
        <taxon>Craniata</taxon>
        <taxon>Vertebrata</taxon>
        <taxon>Euteleostomi</taxon>
        <taxon>Mammalia</taxon>
        <taxon>Eutheria</taxon>
        <taxon>Euarchontoglires</taxon>
        <taxon>Glires</taxon>
        <taxon>Rodentia</taxon>
        <taxon>Myomorpha</taxon>
        <taxon>Muroidea</taxon>
        <taxon>Muridae</taxon>
        <taxon>Murinae</taxon>
        <taxon>Mus</taxon>
        <taxon>Mus</taxon>
    </lineage>
</organism>
<name>KCP3_MOUSE</name>
<gene>
    <name type="primary">Krtcap3</name>
</gene>
<sequence length="240" mass="25687">MRCCGVCAFDAARGPRRLMRVGLALILVGHVNLLVGAVLHGTVLRHVANPRGAVTPEYTTANVISVGSGLLSVSVGLVALLASRNLLRPRLHWALLTLALVNLLLSAACSMGLLLAVSLTVANGGRRLIADCHPGLMDPSIPLDQGPGHTDCSFDPTRIYDTALALWIPSLFMSAAEAALSGYCCVAALTLRGIGPCRKEGLQEQLQELTELELPECKRQENVQLLHGRQDFQALQKTWV</sequence>
<accession>Q8K177</accession>
<accession>Q9D8I7</accession>
<comment type="subcellular location">
    <subcellularLocation>
        <location>Membrane</location>
        <topology>Multi-pass membrane protein</topology>
    </subcellularLocation>
</comment>
<comment type="alternative products">
    <event type="alternative splicing"/>
    <isoform>
        <id>Q8K177-1</id>
        <name>1</name>
        <sequence type="displayed"/>
    </isoform>
    <isoform>
        <id>Q8K177-2</id>
        <name>2</name>
        <sequence type="described" ref="VSP_017531"/>
    </isoform>
</comment>
<comment type="similarity">
    <text evidence="3">Belongs to the TMEM54 family.</text>
</comment>
<comment type="sequence caution" evidence="3">
    <conflict type="erroneous initiation">
        <sequence resource="EMBL-CDS" id="AAH27812"/>
    </conflict>
</comment>
<comment type="sequence caution" evidence="3">
    <conflict type="erroneous initiation">
        <sequence resource="EMBL-CDS" id="AAI07025"/>
    </conflict>
</comment>
<comment type="sequence caution" evidence="3">
    <conflict type="erroneous initiation">
        <sequence resource="EMBL-CDS" id="AAI07026"/>
    </conflict>
</comment>
<comment type="sequence caution" evidence="3">
    <conflict type="erroneous initiation">
        <sequence resource="EMBL-CDS" id="BAB25399"/>
    </conflict>
</comment>
<protein>
    <recommendedName>
        <fullName>Keratinocyte-associated protein 3</fullName>
        <shortName>KCP-3</shortName>
    </recommendedName>
</protein>
<reference key="1">
    <citation type="journal article" date="2005" name="Science">
        <title>The transcriptional landscape of the mammalian genome.</title>
        <authorList>
            <person name="Carninci P."/>
            <person name="Kasukawa T."/>
            <person name="Katayama S."/>
            <person name="Gough J."/>
            <person name="Frith M.C."/>
            <person name="Maeda N."/>
            <person name="Oyama R."/>
            <person name="Ravasi T."/>
            <person name="Lenhard B."/>
            <person name="Wells C."/>
            <person name="Kodzius R."/>
            <person name="Shimokawa K."/>
            <person name="Bajic V.B."/>
            <person name="Brenner S.E."/>
            <person name="Batalov S."/>
            <person name="Forrest A.R."/>
            <person name="Zavolan M."/>
            <person name="Davis M.J."/>
            <person name="Wilming L.G."/>
            <person name="Aidinis V."/>
            <person name="Allen J.E."/>
            <person name="Ambesi-Impiombato A."/>
            <person name="Apweiler R."/>
            <person name="Aturaliya R.N."/>
            <person name="Bailey T.L."/>
            <person name="Bansal M."/>
            <person name="Baxter L."/>
            <person name="Beisel K.W."/>
            <person name="Bersano T."/>
            <person name="Bono H."/>
            <person name="Chalk A.M."/>
            <person name="Chiu K.P."/>
            <person name="Choudhary V."/>
            <person name="Christoffels A."/>
            <person name="Clutterbuck D.R."/>
            <person name="Crowe M.L."/>
            <person name="Dalla E."/>
            <person name="Dalrymple B.P."/>
            <person name="de Bono B."/>
            <person name="Della Gatta G."/>
            <person name="di Bernardo D."/>
            <person name="Down T."/>
            <person name="Engstrom P."/>
            <person name="Fagiolini M."/>
            <person name="Faulkner G."/>
            <person name="Fletcher C.F."/>
            <person name="Fukushima T."/>
            <person name="Furuno M."/>
            <person name="Futaki S."/>
            <person name="Gariboldi M."/>
            <person name="Georgii-Hemming P."/>
            <person name="Gingeras T.R."/>
            <person name="Gojobori T."/>
            <person name="Green R.E."/>
            <person name="Gustincich S."/>
            <person name="Harbers M."/>
            <person name="Hayashi Y."/>
            <person name="Hensch T.K."/>
            <person name="Hirokawa N."/>
            <person name="Hill D."/>
            <person name="Huminiecki L."/>
            <person name="Iacono M."/>
            <person name="Ikeo K."/>
            <person name="Iwama A."/>
            <person name="Ishikawa T."/>
            <person name="Jakt M."/>
            <person name="Kanapin A."/>
            <person name="Katoh M."/>
            <person name="Kawasawa Y."/>
            <person name="Kelso J."/>
            <person name="Kitamura H."/>
            <person name="Kitano H."/>
            <person name="Kollias G."/>
            <person name="Krishnan S.P."/>
            <person name="Kruger A."/>
            <person name="Kummerfeld S.K."/>
            <person name="Kurochkin I.V."/>
            <person name="Lareau L.F."/>
            <person name="Lazarevic D."/>
            <person name="Lipovich L."/>
            <person name="Liu J."/>
            <person name="Liuni S."/>
            <person name="McWilliam S."/>
            <person name="Madan Babu M."/>
            <person name="Madera M."/>
            <person name="Marchionni L."/>
            <person name="Matsuda H."/>
            <person name="Matsuzawa S."/>
            <person name="Miki H."/>
            <person name="Mignone F."/>
            <person name="Miyake S."/>
            <person name="Morris K."/>
            <person name="Mottagui-Tabar S."/>
            <person name="Mulder N."/>
            <person name="Nakano N."/>
            <person name="Nakauchi H."/>
            <person name="Ng P."/>
            <person name="Nilsson R."/>
            <person name="Nishiguchi S."/>
            <person name="Nishikawa S."/>
            <person name="Nori F."/>
            <person name="Ohara O."/>
            <person name="Okazaki Y."/>
            <person name="Orlando V."/>
            <person name="Pang K.C."/>
            <person name="Pavan W.J."/>
            <person name="Pavesi G."/>
            <person name="Pesole G."/>
            <person name="Petrovsky N."/>
            <person name="Piazza S."/>
            <person name="Reed J."/>
            <person name="Reid J.F."/>
            <person name="Ring B.Z."/>
            <person name="Ringwald M."/>
            <person name="Rost B."/>
            <person name="Ruan Y."/>
            <person name="Salzberg S.L."/>
            <person name="Sandelin A."/>
            <person name="Schneider C."/>
            <person name="Schoenbach C."/>
            <person name="Sekiguchi K."/>
            <person name="Semple C.A."/>
            <person name="Seno S."/>
            <person name="Sessa L."/>
            <person name="Sheng Y."/>
            <person name="Shibata Y."/>
            <person name="Shimada H."/>
            <person name="Shimada K."/>
            <person name="Silva D."/>
            <person name="Sinclair B."/>
            <person name="Sperling S."/>
            <person name="Stupka E."/>
            <person name="Sugiura K."/>
            <person name="Sultana R."/>
            <person name="Takenaka Y."/>
            <person name="Taki K."/>
            <person name="Tammoja K."/>
            <person name="Tan S.L."/>
            <person name="Tang S."/>
            <person name="Taylor M.S."/>
            <person name="Tegner J."/>
            <person name="Teichmann S.A."/>
            <person name="Ueda H.R."/>
            <person name="van Nimwegen E."/>
            <person name="Verardo R."/>
            <person name="Wei C.L."/>
            <person name="Yagi K."/>
            <person name="Yamanishi H."/>
            <person name="Zabarovsky E."/>
            <person name="Zhu S."/>
            <person name="Zimmer A."/>
            <person name="Hide W."/>
            <person name="Bult C."/>
            <person name="Grimmond S.M."/>
            <person name="Teasdale R.D."/>
            <person name="Liu E.T."/>
            <person name="Brusic V."/>
            <person name="Quackenbush J."/>
            <person name="Wahlestedt C."/>
            <person name="Mattick J.S."/>
            <person name="Hume D.A."/>
            <person name="Kai C."/>
            <person name="Sasaki D."/>
            <person name="Tomaru Y."/>
            <person name="Fukuda S."/>
            <person name="Kanamori-Katayama M."/>
            <person name="Suzuki M."/>
            <person name="Aoki J."/>
            <person name="Arakawa T."/>
            <person name="Iida J."/>
            <person name="Imamura K."/>
            <person name="Itoh M."/>
            <person name="Kato T."/>
            <person name="Kawaji H."/>
            <person name="Kawagashira N."/>
            <person name="Kawashima T."/>
            <person name="Kojima M."/>
            <person name="Kondo S."/>
            <person name="Konno H."/>
            <person name="Nakano K."/>
            <person name="Ninomiya N."/>
            <person name="Nishio T."/>
            <person name="Okada M."/>
            <person name="Plessy C."/>
            <person name="Shibata K."/>
            <person name="Shiraki T."/>
            <person name="Suzuki S."/>
            <person name="Tagami M."/>
            <person name="Waki K."/>
            <person name="Watahiki A."/>
            <person name="Okamura-Oho Y."/>
            <person name="Suzuki H."/>
            <person name="Kawai J."/>
            <person name="Hayashizaki Y."/>
        </authorList>
    </citation>
    <scope>NUCLEOTIDE SEQUENCE [LARGE SCALE MRNA] (ISOFORM 2)</scope>
    <source>
        <strain>C57BL/6J</strain>
        <tissue>Small intestine</tissue>
    </source>
</reference>
<reference key="2">
    <citation type="journal article" date="2004" name="Genome Res.">
        <title>The status, quality, and expansion of the NIH full-length cDNA project: the Mammalian Gene Collection (MGC).</title>
        <authorList>
            <consortium name="The MGC Project Team"/>
        </authorList>
    </citation>
    <scope>NUCLEOTIDE SEQUENCE [LARGE SCALE MRNA] (ISOFORM 1)</scope>
    <source>
        <strain>C57BL/6J</strain>
        <strain>FVB/N</strain>
        <tissue>Mammary tumor</tissue>
        <tissue>Small intestine</tissue>
    </source>
</reference>
<evidence type="ECO:0000255" key="1"/>
<evidence type="ECO:0000303" key="2">
    <source>
    </source>
</evidence>
<evidence type="ECO:0000305" key="3"/>
<keyword id="KW-0025">Alternative splicing</keyword>
<keyword id="KW-0472">Membrane</keyword>
<keyword id="KW-1185">Reference proteome</keyword>
<keyword id="KW-0812">Transmembrane</keyword>
<keyword id="KW-1133">Transmembrane helix</keyword>
<proteinExistence type="evidence at transcript level"/>